<reference key="1">
    <citation type="journal article" date="1998" name="Nature">
        <title>Deciphering the biology of Mycobacterium tuberculosis from the complete genome sequence.</title>
        <authorList>
            <person name="Cole S.T."/>
            <person name="Brosch R."/>
            <person name="Parkhill J."/>
            <person name="Garnier T."/>
            <person name="Churcher C.M."/>
            <person name="Harris D.E."/>
            <person name="Gordon S.V."/>
            <person name="Eiglmeier K."/>
            <person name="Gas S."/>
            <person name="Barry C.E. III"/>
            <person name="Tekaia F."/>
            <person name="Badcock K."/>
            <person name="Basham D."/>
            <person name="Brown D."/>
            <person name="Chillingworth T."/>
            <person name="Connor R."/>
            <person name="Davies R.M."/>
            <person name="Devlin K."/>
            <person name="Feltwell T."/>
            <person name="Gentles S."/>
            <person name="Hamlin N."/>
            <person name="Holroyd S."/>
            <person name="Hornsby T."/>
            <person name="Jagels K."/>
            <person name="Krogh A."/>
            <person name="McLean J."/>
            <person name="Moule S."/>
            <person name="Murphy L.D."/>
            <person name="Oliver S."/>
            <person name="Osborne J."/>
            <person name="Quail M.A."/>
            <person name="Rajandream M.A."/>
            <person name="Rogers J."/>
            <person name="Rutter S."/>
            <person name="Seeger K."/>
            <person name="Skelton S."/>
            <person name="Squares S."/>
            <person name="Squares R."/>
            <person name="Sulston J.E."/>
            <person name="Taylor K."/>
            <person name="Whitehead S."/>
            <person name="Barrell B.G."/>
        </authorList>
    </citation>
    <scope>NUCLEOTIDE SEQUENCE [LARGE SCALE GENOMIC DNA]</scope>
    <source>
        <strain>ATCC 25618 / H37Rv</strain>
    </source>
</reference>
<accession>P9WKS1</accession>
<accession>L0T6C0</accession>
<accession>O53802</accession>
<comment type="similarity">
    <text evidence="1">To M.tuberculosis Rv0025 and Rv0026.</text>
</comment>
<gene>
    <name type="ordered locus">Rv0739</name>
    <name type="ORF">MTV041.13</name>
</gene>
<protein>
    <recommendedName>
        <fullName>Uncharacterized protein Rv0739</fullName>
    </recommendedName>
</protein>
<keyword id="KW-1185">Reference proteome</keyword>
<evidence type="ECO:0000305" key="1"/>
<organism>
    <name type="scientific">Mycobacterium tuberculosis (strain ATCC 25618 / H37Rv)</name>
    <dbReference type="NCBI Taxonomy" id="83332"/>
    <lineage>
        <taxon>Bacteria</taxon>
        <taxon>Bacillati</taxon>
        <taxon>Actinomycetota</taxon>
        <taxon>Actinomycetes</taxon>
        <taxon>Mycobacteriales</taxon>
        <taxon>Mycobacteriaceae</taxon>
        <taxon>Mycobacterium</taxon>
        <taxon>Mycobacterium tuberculosis complex</taxon>
    </lineage>
</organism>
<sequence>MVLTRRAREVALTQHIGVSAETDRAVVPKLRQAYDSLVCGRRRLGAIGAEIENAVAHQRALGLDTPAGARNFSRFLATKAHDITRVLAATAAESQAGAARLRSLASSYQAVGFGPKPQEPPPDPVPFPPYQPKVWAACRARGQDPDKVVRTFHHAPMSARFRSLPAGDSVLYCGNDKYGLLHIQAKHGRQWHDIADARWPSAGNWRYLADYAIGATLAYPERVEYNQDNDTFAVYRRMSLPDGRYVFTTRVIISARDGKIITAFPQTT</sequence>
<dbReference type="EMBL" id="AL123456">
    <property type="protein sequence ID" value="CCP43484.1"/>
    <property type="molecule type" value="Genomic_DNA"/>
</dbReference>
<dbReference type="PIR" id="F70823">
    <property type="entry name" value="F70823"/>
</dbReference>
<dbReference type="RefSeq" id="NP_215253.1">
    <property type="nucleotide sequence ID" value="NC_000962.3"/>
</dbReference>
<dbReference type="RefSeq" id="WP_003898568.1">
    <property type="nucleotide sequence ID" value="NZ_NVQJ01000007.1"/>
</dbReference>
<dbReference type="STRING" id="83332.Rv0739"/>
<dbReference type="PaxDb" id="83332-Rv0739"/>
<dbReference type="DNASU" id="888622"/>
<dbReference type="GeneID" id="888622"/>
<dbReference type="KEGG" id="mtu:Rv0739"/>
<dbReference type="KEGG" id="mtv:RVBD_0739"/>
<dbReference type="TubercuList" id="Rv0739"/>
<dbReference type="InParanoid" id="P9WKS1"/>
<dbReference type="OrthoDB" id="5144412at2"/>
<dbReference type="Proteomes" id="UP000001584">
    <property type="component" value="Chromosome"/>
</dbReference>
<dbReference type="GO" id="GO:0005886">
    <property type="term" value="C:plasma membrane"/>
    <property type="evidence" value="ECO:0007005"/>
    <property type="project" value="MTBBASE"/>
</dbReference>
<dbReference type="InterPro" id="IPR019710">
    <property type="entry name" value="DUF4226"/>
</dbReference>
<dbReference type="Pfam" id="PF10774">
    <property type="entry name" value="DUF4226"/>
    <property type="match status" value="1"/>
</dbReference>
<name>Y739_MYCTU</name>
<proteinExistence type="predicted"/>
<feature type="chain" id="PRO_0000103716" description="Uncharacterized protein Rv0739">
    <location>
        <begin position="1"/>
        <end position="268"/>
    </location>
</feature>